<protein>
    <recommendedName>
        <fullName evidence="1">Small ribosomal subunit protein bS20</fullName>
    </recommendedName>
    <alternativeName>
        <fullName evidence="2">30S ribosomal protein S20</fullName>
    </alternativeName>
</protein>
<comment type="function">
    <text evidence="1">Binds directly to 16S ribosomal RNA.</text>
</comment>
<comment type="similarity">
    <text evidence="1">Belongs to the bacterial ribosomal protein bS20 family.</text>
</comment>
<reference key="1">
    <citation type="journal article" date="2007" name="J. Bacteriol.">
        <title>The complete genome sequence of the lactic acid bacterial paradigm Lactococcus lactis subsp. cremoris MG1363.</title>
        <authorList>
            <person name="Wegmann U."/>
            <person name="O'Connell-Motherway M."/>
            <person name="Zomer A."/>
            <person name="Buist G."/>
            <person name="Shearman C."/>
            <person name="Canchaya C."/>
            <person name="Ventura M."/>
            <person name="Goesmann A."/>
            <person name="Gasson M.J."/>
            <person name="Kuipers O.P."/>
            <person name="van Sinderen D."/>
            <person name="Kok J."/>
        </authorList>
    </citation>
    <scope>NUCLEOTIDE SEQUENCE [LARGE SCALE GENOMIC DNA]</scope>
    <source>
        <strain>MG1363</strain>
    </source>
</reference>
<accession>A2RMG0</accession>
<keyword id="KW-0002">3D-structure</keyword>
<keyword id="KW-0687">Ribonucleoprotein</keyword>
<keyword id="KW-0689">Ribosomal protein</keyword>
<keyword id="KW-0694">RNA-binding</keyword>
<keyword id="KW-0699">rRNA-binding</keyword>
<sequence>MANIKSAIKRAELNKIANERNAQQKSAMRTLIKKFEAAPSEELYRAASSTIDKAASKGLIHANKASRDKARLAAKLG</sequence>
<gene>
    <name evidence="1" type="primary">rpsT</name>
    <name type="ordered locus">llmg_1921</name>
</gene>
<proteinExistence type="evidence at protein level"/>
<feature type="chain" id="PRO_1000126465" description="Small ribosomal subunit protein bS20">
    <location>
        <begin position="1"/>
        <end position="77"/>
    </location>
</feature>
<dbReference type="EMBL" id="AM406671">
    <property type="protein sequence ID" value="CAL98490.1"/>
    <property type="molecule type" value="Genomic_DNA"/>
</dbReference>
<dbReference type="RefSeq" id="WP_011676734.1">
    <property type="nucleotide sequence ID" value="NC_009004.1"/>
</dbReference>
<dbReference type="PDB" id="5MYJ">
    <property type="method" value="EM"/>
    <property type="resolution" value="5.60 A"/>
    <property type="chains" value="AT=1-77"/>
</dbReference>
<dbReference type="PDBsum" id="5MYJ"/>
<dbReference type="EMDB" id="EMD-3581"/>
<dbReference type="SMR" id="A2RMG0"/>
<dbReference type="STRING" id="416870.llmg_1921"/>
<dbReference type="GeneID" id="61109999"/>
<dbReference type="KEGG" id="llm:llmg_1921"/>
<dbReference type="eggNOG" id="COG0268">
    <property type="taxonomic scope" value="Bacteria"/>
</dbReference>
<dbReference type="HOGENOM" id="CLU_160655_1_1_9"/>
<dbReference type="OrthoDB" id="9808392at2"/>
<dbReference type="PhylomeDB" id="A2RMG0"/>
<dbReference type="Proteomes" id="UP000000364">
    <property type="component" value="Chromosome"/>
</dbReference>
<dbReference type="GO" id="GO:0005829">
    <property type="term" value="C:cytosol"/>
    <property type="evidence" value="ECO:0007669"/>
    <property type="project" value="TreeGrafter"/>
</dbReference>
<dbReference type="GO" id="GO:0015935">
    <property type="term" value="C:small ribosomal subunit"/>
    <property type="evidence" value="ECO:0007669"/>
    <property type="project" value="TreeGrafter"/>
</dbReference>
<dbReference type="GO" id="GO:0070181">
    <property type="term" value="F:small ribosomal subunit rRNA binding"/>
    <property type="evidence" value="ECO:0007669"/>
    <property type="project" value="TreeGrafter"/>
</dbReference>
<dbReference type="GO" id="GO:0003735">
    <property type="term" value="F:structural constituent of ribosome"/>
    <property type="evidence" value="ECO:0007669"/>
    <property type="project" value="InterPro"/>
</dbReference>
<dbReference type="GO" id="GO:0006412">
    <property type="term" value="P:translation"/>
    <property type="evidence" value="ECO:0007669"/>
    <property type="project" value="UniProtKB-UniRule"/>
</dbReference>
<dbReference type="FunFam" id="1.20.58.110:FF:000001">
    <property type="entry name" value="30S ribosomal protein S20"/>
    <property type="match status" value="1"/>
</dbReference>
<dbReference type="Gene3D" id="1.20.58.110">
    <property type="entry name" value="Ribosomal protein S20"/>
    <property type="match status" value="1"/>
</dbReference>
<dbReference type="HAMAP" id="MF_00500">
    <property type="entry name" value="Ribosomal_bS20"/>
    <property type="match status" value="1"/>
</dbReference>
<dbReference type="InterPro" id="IPR002583">
    <property type="entry name" value="Ribosomal_bS20"/>
</dbReference>
<dbReference type="InterPro" id="IPR036510">
    <property type="entry name" value="Ribosomal_bS20_sf"/>
</dbReference>
<dbReference type="NCBIfam" id="TIGR00029">
    <property type="entry name" value="S20"/>
    <property type="match status" value="1"/>
</dbReference>
<dbReference type="PANTHER" id="PTHR33398">
    <property type="entry name" value="30S RIBOSOMAL PROTEIN S20"/>
    <property type="match status" value="1"/>
</dbReference>
<dbReference type="PANTHER" id="PTHR33398:SF1">
    <property type="entry name" value="SMALL RIBOSOMAL SUBUNIT PROTEIN BS20C"/>
    <property type="match status" value="1"/>
</dbReference>
<dbReference type="Pfam" id="PF01649">
    <property type="entry name" value="Ribosomal_S20p"/>
    <property type="match status" value="1"/>
</dbReference>
<dbReference type="SUPFAM" id="SSF46992">
    <property type="entry name" value="Ribosomal protein S20"/>
    <property type="match status" value="1"/>
</dbReference>
<organism>
    <name type="scientific">Lactococcus lactis subsp. cremoris (strain MG1363)</name>
    <dbReference type="NCBI Taxonomy" id="416870"/>
    <lineage>
        <taxon>Bacteria</taxon>
        <taxon>Bacillati</taxon>
        <taxon>Bacillota</taxon>
        <taxon>Bacilli</taxon>
        <taxon>Lactobacillales</taxon>
        <taxon>Streptococcaceae</taxon>
        <taxon>Lactococcus</taxon>
        <taxon>Lactococcus cremoris subsp. cremoris</taxon>
    </lineage>
</organism>
<evidence type="ECO:0000255" key="1">
    <source>
        <dbReference type="HAMAP-Rule" id="MF_00500"/>
    </source>
</evidence>
<evidence type="ECO:0000305" key="2"/>
<name>RS20_LACLM</name>